<reference key="1">
    <citation type="journal article" date="2009" name="PLoS Genet.">
        <title>Organised genome dynamics in the Escherichia coli species results in highly diverse adaptive paths.</title>
        <authorList>
            <person name="Touchon M."/>
            <person name="Hoede C."/>
            <person name="Tenaillon O."/>
            <person name="Barbe V."/>
            <person name="Baeriswyl S."/>
            <person name="Bidet P."/>
            <person name="Bingen E."/>
            <person name="Bonacorsi S."/>
            <person name="Bouchier C."/>
            <person name="Bouvet O."/>
            <person name="Calteau A."/>
            <person name="Chiapello H."/>
            <person name="Clermont O."/>
            <person name="Cruveiller S."/>
            <person name="Danchin A."/>
            <person name="Diard M."/>
            <person name="Dossat C."/>
            <person name="Karoui M.E."/>
            <person name="Frapy E."/>
            <person name="Garry L."/>
            <person name="Ghigo J.M."/>
            <person name="Gilles A.M."/>
            <person name="Johnson J."/>
            <person name="Le Bouguenec C."/>
            <person name="Lescat M."/>
            <person name="Mangenot S."/>
            <person name="Martinez-Jehanne V."/>
            <person name="Matic I."/>
            <person name="Nassif X."/>
            <person name="Oztas S."/>
            <person name="Petit M.A."/>
            <person name="Pichon C."/>
            <person name="Rouy Z."/>
            <person name="Ruf C.S."/>
            <person name="Schneider D."/>
            <person name="Tourret J."/>
            <person name="Vacherie B."/>
            <person name="Vallenet D."/>
            <person name="Medigue C."/>
            <person name="Rocha E.P.C."/>
            <person name="Denamur E."/>
        </authorList>
    </citation>
    <scope>NUCLEOTIDE SEQUENCE [LARGE SCALE GENOMIC DNA]</scope>
    <source>
        <strain>IAI39 / ExPEC</strain>
    </source>
</reference>
<gene>
    <name evidence="1" type="primary">yegS</name>
    <name type="ordered locus">ECIAI39_0928</name>
</gene>
<name>YEGS_ECO7I</name>
<organism>
    <name type="scientific">Escherichia coli O7:K1 (strain IAI39 / ExPEC)</name>
    <dbReference type="NCBI Taxonomy" id="585057"/>
    <lineage>
        <taxon>Bacteria</taxon>
        <taxon>Pseudomonadati</taxon>
        <taxon>Pseudomonadota</taxon>
        <taxon>Gammaproteobacteria</taxon>
        <taxon>Enterobacterales</taxon>
        <taxon>Enterobacteriaceae</taxon>
        <taxon>Escherichia</taxon>
    </lineage>
</organism>
<evidence type="ECO:0000255" key="1">
    <source>
        <dbReference type="HAMAP-Rule" id="MF_01377"/>
    </source>
</evidence>
<sequence>MAEFPASLLILNGKSTDNLPLREAIMLLREEGMTIHVRVTWEKGDAARYVEEARKLGVATVIAGGGDGTINEVSTALIQCEGDDIPALGILPLGTANDFATSVGIPEALDKALKLAIAGNAIAIDMAQVNKQTCFINMATGGFGTRITTETPEKLKAALGGVSYIIHGLMRMDTLQPDRCEIRGENFHWQGDALVIGIGNGRQAGGGQQLCPNALINDGLLQLRIFTGDEILPALVSTLKSDEDNPNIIEGASSWFDIQAPHEITFNLDGEPLSGQNFHIEILPAALRCRLPPDCPLLR</sequence>
<dbReference type="EC" id="2.7.1.-" evidence="1"/>
<dbReference type="EMBL" id="CU928164">
    <property type="protein sequence ID" value="CAR17065.1"/>
    <property type="molecule type" value="Genomic_DNA"/>
</dbReference>
<dbReference type="RefSeq" id="WP_000807362.1">
    <property type="nucleotide sequence ID" value="NC_011750.1"/>
</dbReference>
<dbReference type="RefSeq" id="YP_002406950.1">
    <property type="nucleotide sequence ID" value="NC_011750.1"/>
</dbReference>
<dbReference type="SMR" id="B7NPP4"/>
<dbReference type="STRING" id="585057.ECIAI39_0928"/>
<dbReference type="GeneID" id="75205975"/>
<dbReference type="KEGG" id="ect:ECIAI39_0928"/>
<dbReference type="PATRIC" id="fig|585057.6.peg.978"/>
<dbReference type="HOGENOM" id="CLU_045532_1_1_6"/>
<dbReference type="Proteomes" id="UP000000749">
    <property type="component" value="Chromosome"/>
</dbReference>
<dbReference type="GO" id="GO:0005737">
    <property type="term" value="C:cytoplasm"/>
    <property type="evidence" value="ECO:0007669"/>
    <property type="project" value="UniProtKB-SubCell"/>
</dbReference>
<dbReference type="GO" id="GO:0005886">
    <property type="term" value="C:plasma membrane"/>
    <property type="evidence" value="ECO:0007669"/>
    <property type="project" value="TreeGrafter"/>
</dbReference>
<dbReference type="GO" id="GO:0005524">
    <property type="term" value="F:ATP binding"/>
    <property type="evidence" value="ECO:0007669"/>
    <property type="project" value="UniProtKB-UniRule"/>
</dbReference>
<dbReference type="GO" id="GO:0001727">
    <property type="term" value="F:lipid kinase activity"/>
    <property type="evidence" value="ECO:0007669"/>
    <property type="project" value="UniProtKB-UniRule"/>
</dbReference>
<dbReference type="GO" id="GO:0000287">
    <property type="term" value="F:magnesium ion binding"/>
    <property type="evidence" value="ECO:0007669"/>
    <property type="project" value="UniProtKB-UniRule"/>
</dbReference>
<dbReference type="GO" id="GO:0008654">
    <property type="term" value="P:phospholipid biosynthetic process"/>
    <property type="evidence" value="ECO:0007669"/>
    <property type="project" value="UniProtKB-UniRule"/>
</dbReference>
<dbReference type="FunFam" id="2.60.200.40:FF:000008">
    <property type="entry name" value="Probable lipid kinase YegS"/>
    <property type="match status" value="1"/>
</dbReference>
<dbReference type="FunFam" id="3.40.50.10330:FF:000008">
    <property type="entry name" value="Probable lipid kinase YegS"/>
    <property type="match status" value="1"/>
</dbReference>
<dbReference type="Gene3D" id="2.60.200.40">
    <property type="match status" value="1"/>
</dbReference>
<dbReference type="Gene3D" id="3.40.50.10330">
    <property type="entry name" value="Probable inorganic polyphosphate/atp-NAD kinase, domain 1"/>
    <property type="match status" value="1"/>
</dbReference>
<dbReference type="HAMAP" id="MF_01377">
    <property type="entry name" value="YegS"/>
    <property type="match status" value="1"/>
</dbReference>
<dbReference type="InterPro" id="IPR017438">
    <property type="entry name" value="ATP-NAD_kinase_N"/>
</dbReference>
<dbReference type="InterPro" id="IPR005218">
    <property type="entry name" value="Diacylglycerol/lipid_kinase"/>
</dbReference>
<dbReference type="InterPro" id="IPR001206">
    <property type="entry name" value="Diacylglycerol_kinase_cat_dom"/>
</dbReference>
<dbReference type="InterPro" id="IPR022433">
    <property type="entry name" value="Lip_kinase_YegS"/>
</dbReference>
<dbReference type="InterPro" id="IPR050187">
    <property type="entry name" value="Lipid_Phosphate_FormReg"/>
</dbReference>
<dbReference type="InterPro" id="IPR016064">
    <property type="entry name" value="NAD/diacylglycerol_kinase_sf"/>
</dbReference>
<dbReference type="InterPro" id="IPR045540">
    <property type="entry name" value="YegS/DAGK_C"/>
</dbReference>
<dbReference type="NCBIfam" id="TIGR03702">
    <property type="entry name" value="lip_kinase_YegS"/>
    <property type="match status" value="1"/>
</dbReference>
<dbReference type="NCBIfam" id="NF009602">
    <property type="entry name" value="PRK13054.1"/>
    <property type="match status" value="1"/>
</dbReference>
<dbReference type="NCBIfam" id="TIGR00147">
    <property type="entry name" value="YegS/Rv2252/BmrU family lipid kinase"/>
    <property type="match status" value="1"/>
</dbReference>
<dbReference type="PANTHER" id="PTHR12358:SF106">
    <property type="entry name" value="LIPID KINASE YEGS"/>
    <property type="match status" value="1"/>
</dbReference>
<dbReference type="PANTHER" id="PTHR12358">
    <property type="entry name" value="SPHINGOSINE KINASE"/>
    <property type="match status" value="1"/>
</dbReference>
<dbReference type="Pfam" id="PF00781">
    <property type="entry name" value="DAGK_cat"/>
    <property type="match status" value="1"/>
</dbReference>
<dbReference type="Pfam" id="PF19279">
    <property type="entry name" value="YegS_C"/>
    <property type="match status" value="1"/>
</dbReference>
<dbReference type="SMART" id="SM00046">
    <property type="entry name" value="DAGKc"/>
    <property type="match status" value="1"/>
</dbReference>
<dbReference type="SUPFAM" id="SSF111331">
    <property type="entry name" value="NAD kinase/diacylglycerol kinase-like"/>
    <property type="match status" value="1"/>
</dbReference>
<dbReference type="PROSITE" id="PS50146">
    <property type="entry name" value="DAGK"/>
    <property type="match status" value="1"/>
</dbReference>
<accession>B7NPP4</accession>
<keyword id="KW-0067">ATP-binding</keyword>
<keyword id="KW-0963">Cytoplasm</keyword>
<keyword id="KW-0418">Kinase</keyword>
<keyword id="KW-0444">Lipid biosynthesis</keyword>
<keyword id="KW-0443">Lipid metabolism</keyword>
<keyword id="KW-0460">Magnesium</keyword>
<keyword id="KW-0479">Metal-binding</keyword>
<keyword id="KW-0547">Nucleotide-binding</keyword>
<keyword id="KW-0594">Phospholipid biosynthesis</keyword>
<keyword id="KW-1208">Phospholipid metabolism</keyword>
<keyword id="KW-0808">Transferase</keyword>
<proteinExistence type="inferred from homology"/>
<comment type="function">
    <text evidence="1">Probably phosphorylates lipids; the in vivo substrate is unknown.</text>
</comment>
<comment type="cofactor">
    <cofactor evidence="1">
        <name>Mg(2+)</name>
        <dbReference type="ChEBI" id="CHEBI:18420"/>
    </cofactor>
    <cofactor evidence="1">
        <name>Ca(2+)</name>
        <dbReference type="ChEBI" id="CHEBI:29108"/>
    </cofactor>
    <text evidence="1">Binds 1 Mg(2+) ion per subunit. Ca(2+) may be able to substitute.</text>
</comment>
<comment type="subcellular location">
    <subcellularLocation>
        <location evidence="1">Cytoplasm</location>
    </subcellularLocation>
</comment>
<comment type="similarity">
    <text evidence="1">Belongs to the diacylglycerol/lipid kinase family. YegS lipid kinase subfamily.</text>
</comment>
<protein>
    <recommendedName>
        <fullName evidence="1">Probable lipid kinase YegS</fullName>
        <ecNumber evidence="1">2.7.1.-</ecNumber>
    </recommendedName>
</protein>
<feature type="chain" id="PRO_1000144864" description="Probable lipid kinase YegS">
    <location>
        <begin position="1"/>
        <end position="299"/>
    </location>
</feature>
<feature type="domain" description="DAGKc" evidence="1">
    <location>
        <begin position="2"/>
        <end position="133"/>
    </location>
</feature>
<feature type="active site" description="Proton acceptor" evidence="1">
    <location>
        <position position="271"/>
    </location>
</feature>
<feature type="binding site" evidence="1">
    <location>
        <position position="40"/>
    </location>
    <ligand>
        <name>ATP</name>
        <dbReference type="ChEBI" id="CHEBI:30616"/>
    </ligand>
</feature>
<feature type="binding site" evidence="1">
    <location>
        <begin position="66"/>
        <end position="72"/>
    </location>
    <ligand>
        <name>ATP</name>
        <dbReference type="ChEBI" id="CHEBI:30616"/>
    </ligand>
</feature>
<feature type="binding site" evidence="1">
    <location>
        <position position="95"/>
    </location>
    <ligand>
        <name>ATP</name>
        <dbReference type="ChEBI" id="CHEBI:30616"/>
    </ligand>
</feature>
<feature type="binding site" evidence="1">
    <location>
        <position position="215"/>
    </location>
    <ligand>
        <name>Mg(2+)</name>
        <dbReference type="ChEBI" id="CHEBI:18420"/>
    </ligand>
</feature>
<feature type="binding site" evidence="1">
    <location>
        <position position="218"/>
    </location>
    <ligand>
        <name>Mg(2+)</name>
        <dbReference type="ChEBI" id="CHEBI:18420"/>
    </ligand>
</feature>
<feature type="binding site" evidence="1">
    <location>
        <position position="220"/>
    </location>
    <ligand>
        <name>Mg(2+)</name>
        <dbReference type="ChEBI" id="CHEBI:18420"/>
    </ligand>
</feature>